<keyword id="KW-0004">4Fe-4S</keyword>
<keyword id="KW-0067">ATP-binding</keyword>
<keyword id="KW-0408">Iron</keyword>
<keyword id="KW-0411">Iron-sulfur</keyword>
<keyword id="KW-0479">Metal-binding</keyword>
<keyword id="KW-0496">Mitochondrion</keyword>
<keyword id="KW-0547">Nucleotide-binding</keyword>
<keyword id="KW-1185">Reference proteome</keyword>
<keyword id="KW-0809">Transit peptide</keyword>
<proteinExistence type="inferred from homology"/>
<protein>
    <recommendedName>
        <fullName evidence="4">Iron-sulfur cluster transfer protein NUBPL</fullName>
    </recommendedName>
    <alternativeName>
        <fullName>Nucleotide-binding protein-like</fullName>
    </alternativeName>
</protein>
<reference key="1">
    <citation type="journal article" date="2005" name="Nature">
        <title>The genome of the social amoeba Dictyostelium discoideum.</title>
        <authorList>
            <person name="Eichinger L."/>
            <person name="Pachebat J.A."/>
            <person name="Gloeckner G."/>
            <person name="Rajandream M.A."/>
            <person name="Sucgang R."/>
            <person name="Berriman M."/>
            <person name="Song J."/>
            <person name="Olsen R."/>
            <person name="Szafranski K."/>
            <person name="Xu Q."/>
            <person name="Tunggal B."/>
            <person name="Kummerfeld S."/>
            <person name="Madera M."/>
            <person name="Konfortov B.A."/>
            <person name="Rivero F."/>
            <person name="Bankier A.T."/>
            <person name="Lehmann R."/>
            <person name="Hamlin N."/>
            <person name="Davies R."/>
            <person name="Gaudet P."/>
            <person name="Fey P."/>
            <person name="Pilcher K."/>
            <person name="Chen G."/>
            <person name="Saunders D."/>
            <person name="Sodergren E.J."/>
            <person name="Davis P."/>
            <person name="Kerhornou A."/>
            <person name="Nie X."/>
            <person name="Hall N."/>
            <person name="Anjard C."/>
            <person name="Hemphill L."/>
            <person name="Bason N."/>
            <person name="Farbrother P."/>
            <person name="Desany B."/>
            <person name="Just E."/>
            <person name="Morio T."/>
            <person name="Rost R."/>
            <person name="Churcher C.M."/>
            <person name="Cooper J."/>
            <person name="Haydock S."/>
            <person name="van Driessche N."/>
            <person name="Cronin A."/>
            <person name="Goodhead I."/>
            <person name="Muzny D.M."/>
            <person name="Mourier T."/>
            <person name="Pain A."/>
            <person name="Lu M."/>
            <person name="Harper D."/>
            <person name="Lindsay R."/>
            <person name="Hauser H."/>
            <person name="James K.D."/>
            <person name="Quiles M."/>
            <person name="Madan Babu M."/>
            <person name="Saito T."/>
            <person name="Buchrieser C."/>
            <person name="Wardroper A."/>
            <person name="Felder M."/>
            <person name="Thangavelu M."/>
            <person name="Johnson D."/>
            <person name="Knights A."/>
            <person name="Loulseged H."/>
            <person name="Mungall K.L."/>
            <person name="Oliver K."/>
            <person name="Price C."/>
            <person name="Quail M.A."/>
            <person name="Urushihara H."/>
            <person name="Hernandez J."/>
            <person name="Rabbinowitsch E."/>
            <person name="Steffen D."/>
            <person name="Sanders M."/>
            <person name="Ma J."/>
            <person name="Kohara Y."/>
            <person name="Sharp S."/>
            <person name="Simmonds M.N."/>
            <person name="Spiegler S."/>
            <person name="Tivey A."/>
            <person name="Sugano S."/>
            <person name="White B."/>
            <person name="Walker D."/>
            <person name="Woodward J.R."/>
            <person name="Winckler T."/>
            <person name="Tanaka Y."/>
            <person name="Shaulsky G."/>
            <person name="Schleicher M."/>
            <person name="Weinstock G.M."/>
            <person name="Rosenthal A."/>
            <person name="Cox E.C."/>
            <person name="Chisholm R.L."/>
            <person name="Gibbs R.A."/>
            <person name="Loomis W.F."/>
            <person name="Platzer M."/>
            <person name="Kay R.R."/>
            <person name="Williams J.G."/>
            <person name="Dear P.H."/>
            <person name="Noegel A.A."/>
            <person name="Barrell B.G."/>
            <person name="Kuspa A."/>
        </authorList>
    </citation>
    <scope>NUCLEOTIDE SEQUENCE [LARGE SCALE GENOMIC DNA]</scope>
    <source>
        <strain>AX4</strain>
    </source>
</reference>
<feature type="transit peptide" description="Mitochondrion" evidence="1">
    <location>
        <begin position="1"/>
        <end status="unknown"/>
    </location>
</feature>
<feature type="chain" id="PRO_0000327673" description="Iron-sulfur cluster transfer protein NUBPL">
    <location>
        <begin status="unknown"/>
        <end position="323"/>
    </location>
</feature>
<feature type="binding site" evidence="3">
    <location>
        <begin position="65"/>
        <end position="72"/>
    </location>
    <ligand>
        <name>ATP</name>
        <dbReference type="ChEBI" id="CHEBI:30616"/>
    </ligand>
</feature>
<organism>
    <name type="scientific">Dictyostelium discoideum</name>
    <name type="common">Social amoeba</name>
    <dbReference type="NCBI Taxonomy" id="44689"/>
    <lineage>
        <taxon>Eukaryota</taxon>
        <taxon>Amoebozoa</taxon>
        <taxon>Evosea</taxon>
        <taxon>Eumycetozoa</taxon>
        <taxon>Dictyostelia</taxon>
        <taxon>Dictyosteliales</taxon>
        <taxon>Dictyosteliaceae</taxon>
        <taxon>Dictyostelium</taxon>
    </lineage>
</organism>
<gene>
    <name type="primary">nubpl</name>
    <name type="ORF">DDB_G0291193</name>
</gene>
<name>NUBPL_DICDI</name>
<sequence>MFKKLITTPFFSPNKQFITFQLESGKRNYFSNNKIQLHGGSGHRQPQVTKVAIEGIKNIIAVSSAKGGVGKSTCAVNIALGLSSHNLSVGLLDVDVFGPSIPLMMDLKNHEKPFTNELNQMIPLQNYGIKCMSMGFLVNEDDPIIWRGPMVGSALEKLLRQTDWGHLDVLVCDLPPGTGDAILTMCQRVPLTGAVIVSTPQDVALADVVRGVNMFKKVEVPILGLVENMSYFNCPHCNESTHIFGNEGAKNTAKKMGINFLGDVPIHLQIRETSDSGKPITVTQPDSPQAKNYKDISKEIIKQLEIINNDENKDNKEPNIIIT</sequence>
<evidence type="ECO:0000250" key="1"/>
<evidence type="ECO:0000250" key="2">
    <source>
        <dbReference type="UniProtKB" id="Q8TB37"/>
    </source>
</evidence>
<evidence type="ECO:0000255" key="3"/>
<evidence type="ECO:0000305" key="4"/>
<comment type="function">
    <text evidence="1 2">Iron-sulfur cluster transfer protein involved in the assembly of the mitochondrial membrane respiratory chain NADH dehydrogenase (Complex I) (By similarity). May deliver one or more Fe-S clusters to complex I subunits (By similarity).</text>
</comment>
<comment type="cofactor">
    <cofactor evidence="1">
        <name>[4Fe-4S] cluster</name>
        <dbReference type="ChEBI" id="CHEBI:49883"/>
    </cofactor>
    <text evidence="1">Binds 1 [4Fe-4S] cluster.</text>
</comment>
<comment type="subcellular location">
    <subcellularLocation>
        <location evidence="1">Mitochondrion</location>
    </subcellularLocation>
</comment>
<comment type="similarity">
    <text evidence="4">Belongs to the Mrp/NBP35 ATP-binding proteins family.</text>
</comment>
<accession>Q54F15</accession>
<dbReference type="EMBL" id="AAFI02000175">
    <property type="protein sequence ID" value="EAL61880.1"/>
    <property type="molecule type" value="Genomic_DNA"/>
</dbReference>
<dbReference type="RefSeq" id="XP_635375.1">
    <property type="nucleotide sequence ID" value="XM_630283.1"/>
</dbReference>
<dbReference type="SMR" id="Q54F15"/>
<dbReference type="FunCoup" id="Q54F15">
    <property type="interactions" value="81"/>
</dbReference>
<dbReference type="STRING" id="44689.Q54F15"/>
<dbReference type="PaxDb" id="44689-DDB0232425"/>
<dbReference type="EnsemblProtists" id="EAL61880">
    <property type="protein sequence ID" value="EAL61880"/>
    <property type="gene ID" value="DDB_G0291193"/>
</dbReference>
<dbReference type="GeneID" id="8628023"/>
<dbReference type="KEGG" id="ddi:DDB_G0291193"/>
<dbReference type="dictyBase" id="DDB_G0291193">
    <property type="gene designation" value="nubpl"/>
</dbReference>
<dbReference type="VEuPathDB" id="AmoebaDB:DDB_G0291193"/>
<dbReference type="eggNOG" id="KOG3022">
    <property type="taxonomic scope" value="Eukaryota"/>
</dbReference>
<dbReference type="HOGENOM" id="CLU_024839_0_2_1"/>
<dbReference type="InParanoid" id="Q54F15"/>
<dbReference type="OMA" id="CNHESHI"/>
<dbReference type="PhylomeDB" id="Q54F15"/>
<dbReference type="Reactome" id="R-DDI-6799198">
    <property type="pathway name" value="Complex I biogenesis"/>
</dbReference>
<dbReference type="PRO" id="PR:Q54F15"/>
<dbReference type="Proteomes" id="UP000002195">
    <property type="component" value="Chromosome 5"/>
</dbReference>
<dbReference type="GO" id="GO:0005739">
    <property type="term" value="C:mitochondrion"/>
    <property type="evidence" value="ECO:0000318"/>
    <property type="project" value="GO_Central"/>
</dbReference>
<dbReference type="GO" id="GO:0051539">
    <property type="term" value="F:4 iron, 4 sulfur cluster binding"/>
    <property type="evidence" value="ECO:0000318"/>
    <property type="project" value="GO_Central"/>
</dbReference>
<dbReference type="GO" id="GO:0005524">
    <property type="term" value="F:ATP binding"/>
    <property type="evidence" value="ECO:0007669"/>
    <property type="project" value="UniProtKB-KW"/>
</dbReference>
<dbReference type="GO" id="GO:0140663">
    <property type="term" value="F:ATP-dependent FeS chaperone activity"/>
    <property type="evidence" value="ECO:0007669"/>
    <property type="project" value="InterPro"/>
</dbReference>
<dbReference type="GO" id="GO:0046872">
    <property type="term" value="F:metal ion binding"/>
    <property type="evidence" value="ECO:0007669"/>
    <property type="project" value="UniProtKB-KW"/>
</dbReference>
<dbReference type="GO" id="GO:0016226">
    <property type="term" value="P:iron-sulfur cluster assembly"/>
    <property type="evidence" value="ECO:0000318"/>
    <property type="project" value="GO_Central"/>
</dbReference>
<dbReference type="GO" id="GO:0032981">
    <property type="term" value="P:mitochondrial respiratory chain complex I assembly"/>
    <property type="evidence" value="ECO:0000318"/>
    <property type="project" value="GO_Central"/>
</dbReference>
<dbReference type="CDD" id="cd02037">
    <property type="entry name" value="Mrp_NBP35"/>
    <property type="match status" value="1"/>
</dbReference>
<dbReference type="FunFam" id="3.40.50.300:FF:000418">
    <property type="entry name" value="Iron-sulfur cluster carrier protein"/>
    <property type="match status" value="1"/>
</dbReference>
<dbReference type="Gene3D" id="3.40.50.300">
    <property type="entry name" value="P-loop containing nucleotide triphosphate hydrolases"/>
    <property type="match status" value="1"/>
</dbReference>
<dbReference type="HAMAP" id="MF_02040">
    <property type="entry name" value="Mrp_NBP35"/>
    <property type="match status" value="1"/>
</dbReference>
<dbReference type="InterPro" id="IPR019591">
    <property type="entry name" value="Mrp/NBP35_ATP-bd"/>
</dbReference>
<dbReference type="InterPro" id="IPR044304">
    <property type="entry name" value="NUBPL-like"/>
</dbReference>
<dbReference type="InterPro" id="IPR027417">
    <property type="entry name" value="P-loop_NTPase"/>
</dbReference>
<dbReference type="InterPro" id="IPR033756">
    <property type="entry name" value="YlxH/NBP35"/>
</dbReference>
<dbReference type="PANTHER" id="PTHR42961">
    <property type="entry name" value="IRON-SULFUR PROTEIN NUBPL"/>
    <property type="match status" value="1"/>
</dbReference>
<dbReference type="PANTHER" id="PTHR42961:SF2">
    <property type="entry name" value="IRON-SULFUR PROTEIN NUBPL"/>
    <property type="match status" value="1"/>
</dbReference>
<dbReference type="Pfam" id="PF10609">
    <property type="entry name" value="ParA"/>
    <property type="match status" value="1"/>
</dbReference>
<dbReference type="SUPFAM" id="SSF52540">
    <property type="entry name" value="P-loop containing nucleoside triphosphate hydrolases"/>
    <property type="match status" value="1"/>
</dbReference>